<dbReference type="EMBL" id="AC099571">
    <property type="status" value="NOT_ANNOTATED_CDS"/>
    <property type="molecule type" value="Genomic_DNA"/>
</dbReference>
<dbReference type="CCDS" id="CCDS31100.1"/>
<dbReference type="RefSeq" id="NP_001005522.1">
    <property type="nucleotide sequence ID" value="NM_001005522.2"/>
</dbReference>
<dbReference type="RefSeq" id="XP_011542480.1">
    <property type="nucleotide sequence ID" value="XM_011544178.2"/>
</dbReference>
<dbReference type="RefSeq" id="XP_016856661.1">
    <property type="nucleotide sequence ID" value="XM_017001172.1"/>
</dbReference>
<dbReference type="SMR" id="A6NH00"/>
<dbReference type="FunCoup" id="A6NH00">
    <property type="interactions" value="463"/>
</dbReference>
<dbReference type="STRING" id="9606.ENSP00000493286"/>
<dbReference type="GlyCosmos" id="A6NH00">
    <property type="glycosylation" value="2 sites, No reported glycans"/>
</dbReference>
<dbReference type="GlyGen" id="A6NH00">
    <property type="glycosylation" value="2 sites"/>
</dbReference>
<dbReference type="iPTMnet" id="A6NH00"/>
<dbReference type="PhosphoSitePlus" id="A6NH00"/>
<dbReference type="BioMuta" id="OR2T8"/>
<dbReference type="PaxDb" id="9606-ENSP00000326225"/>
<dbReference type="Antibodypedia" id="57425">
    <property type="antibodies" value="63 antibodies from 17 providers"/>
</dbReference>
<dbReference type="DNASU" id="343172"/>
<dbReference type="Ensembl" id="ENST00000641945.2">
    <property type="protein sequence ID" value="ENSP00000493286.1"/>
    <property type="gene ID" value="ENSG00000177462.9"/>
</dbReference>
<dbReference type="GeneID" id="343172"/>
<dbReference type="KEGG" id="hsa:343172"/>
<dbReference type="MANE-Select" id="ENST00000641945.2">
    <property type="protein sequence ID" value="ENSP00000493286.1"/>
    <property type="RefSeq nucleotide sequence ID" value="NM_001005522.2"/>
    <property type="RefSeq protein sequence ID" value="NP_001005522.1"/>
</dbReference>
<dbReference type="UCSC" id="uc010pzc.2">
    <property type="organism name" value="human"/>
</dbReference>
<dbReference type="AGR" id="HGNC:15020"/>
<dbReference type="CTD" id="343172"/>
<dbReference type="GeneCards" id="OR2T8"/>
<dbReference type="HGNC" id="HGNC:15020">
    <property type="gene designation" value="OR2T8"/>
</dbReference>
<dbReference type="HPA" id="ENSG00000177462">
    <property type="expression patterns" value="Not detected"/>
</dbReference>
<dbReference type="neXtProt" id="NX_A6NH00"/>
<dbReference type="PharmGKB" id="PA32208"/>
<dbReference type="VEuPathDB" id="HostDB:ENSG00000177462"/>
<dbReference type="eggNOG" id="ENOG502RU0Z">
    <property type="taxonomic scope" value="Eukaryota"/>
</dbReference>
<dbReference type="GeneTree" id="ENSGT01130000278260"/>
<dbReference type="HOGENOM" id="CLU_012526_1_0_1"/>
<dbReference type="InParanoid" id="A6NH00"/>
<dbReference type="OMA" id="MDQCAAL"/>
<dbReference type="OrthoDB" id="10017003at2759"/>
<dbReference type="PAN-GO" id="A6NH00">
    <property type="GO annotations" value="0 GO annotations based on evolutionary models"/>
</dbReference>
<dbReference type="PhylomeDB" id="A6NH00"/>
<dbReference type="TreeFam" id="TF337295"/>
<dbReference type="PathwayCommons" id="A6NH00"/>
<dbReference type="Reactome" id="R-HSA-9752946">
    <property type="pathway name" value="Expression and translocation of olfactory receptors"/>
</dbReference>
<dbReference type="SignaLink" id="A6NH00"/>
<dbReference type="BioGRID-ORCS" id="343172">
    <property type="hits" value="9 hits in 652 CRISPR screens"/>
</dbReference>
<dbReference type="GenomeRNAi" id="343172"/>
<dbReference type="Pharos" id="A6NH00">
    <property type="development level" value="Tdark"/>
</dbReference>
<dbReference type="PRO" id="PR:A6NH00"/>
<dbReference type="Proteomes" id="UP000005640">
    <property type="component" value="Chromosome 1"/>
</dbReference>
<dbReference type="RNAct" id="A6NH00">
    <property type="molecule type" value="protein"/>
</dbReference>
<dbReference type="Bgee" id="ENSG00000177462">
    <property type="expression patterns" value="Expressed in primordial germ cell in gonad and 36 other cell types or tissues"/>
</dbReference>
<dbReference type="GO" id="GO:0005886">
    <property type="term" value="C:plasma membrane"/>
    <property type="evidence" value="ECO:0000318"/>
    <property type="project" value="GO_Central"/>
</dbReference>
<dbReference type="GO" id="GO:0004930">
    <property type="term" value="F:G protein-coupled receptor activity"/>
    <property type="evidence" value="ECO:0007669"/>
    <property type="project" value="UniProtKB-KW"/>
</dbReference>
<dbReference type="GO" id="GO:0004984">
    <property type="term" value="F:olfactory receptor activity"/>
    <property type="evidence" value="ECO:0000318"/>
    <property type="project" value="GO_Central"/>
</dbReference>
<dbReference type="GO" id="GO:0050911">
    <property type="term" value="P:detection of chemical stimulus involved in sensory perception of smell"/>
    <property type="evidence" value="ECO:0000318"/>
    <property type="project" value="GO_Central"/>
</dbReference>
<dbReference type="CDD" id="cd15421">
    <property type="entry name" value="7tmA_OR2T-like"/>
    <property type="match status" value="1"/>
</dbReference>
<dbReference type="FunFam" id="1.20.1070.10:FF:000008">
    <property type="entry name" value="Olfactory receptor"/>
    <property type="match status" value="1"/>
</dbReference>
<dbReference type="Gene3D" id="1.20.1070.10">
    <property type="entry name" value="Rhodopsin 7-helix transmembrane proteins"/>
    <property type="match status" value="1"/>
</dbReference>
<dbReference type="InterPro" id="IPR000276">
    <property type="entry name" value="GPCR_Rhodpsn"/>
</dbReference>
<dbReference type="InterPro" id="IPR017452">
    <property type="entry name" value="GPCR_Rhodpsn_7TM"/>
</dbReference>
<dbReference type="InterPro" id="IPR000725">
    <property type="entry name" value="Olfact_rcpt"/>
</dbReference>
<dbReference type="PANTHER" id="PTHR26453">
    <property type="entry name" value="OLFACTORY RECEPTOR"/>
    <property type="match status" value="1"/>
</dbReference>
<dbReference type="Pfam" id="PF13853">
    <property type="entry name" value="7tm_4"/>
    <property type="match status" value="1"/>
</dbReference>
<dbReference type="PRINTS" id="PR00237">
    <property type="entry name" value="GPCRRHODOPSN"/>
</dbReference>
<dbReference type="PRINTS" id="PR00245">
    <property type="entry name" value="OLFACTORYR"/>
</dbReference>
<dbReference type="SUPFAM" id="SSF81321">
    <property type="entry name" value="Family A G protein-coupled receptor-like"/>
    <property type="match status" value="1"/>
</dbReference>
<dbReference type="PROSITE" id="PS00237">
    <property type="entry name" value="G_PROTEIN_RECEP_F1_1"/>
    <property type="match status" value="1"/>
</dbReference>
<dbReference type="PROSITE" id="PS50262">
    <property type="entry name" value="G_PROTEIN_RECEP_F1_2"/>
    <property type="match status" value="1"/>
</dbReference>
<feature type="chain" id="PRO_0000311914" description="Olfactory receptor 2T8">
    <location>
        <begin position="1"/>
        <end position="312"/>
    </location>
</feature>
<feature type="topological domain" description="Extracellular" evidence="1">
    <location>
        <begin position="1"/>
        <end position="26"/>
    </location>
</feature>
<feature type="transmembrane region" description="Helical; Name=1" evidence="1">
    <location>
        <begin position="27"/>
        <end position="47"/>
    </location>
</feature>
<feature type="topological domain" description="Cytoplasmic" evidence="1">
    <location>
        <begin position="48"/>
        <end position="55"/>
    </location>
</feature>
<feature type="transmembrane region" description="Helical; Name=2" evidence="1">
    <location>
        <begin position="56"/>
        <end position="76"/>
    </location>
</feature>
<feature type="topological domain" description="Extracellular" evidence="1">
    <location>
        <begin position="77"/>
        <end position="96"/>
    </location>
</feature>
<feature type="transmembrane region" description="Helical; Name=3" evidence="1">
    <location>
        <begin position="97"/>
        <end position="117"/>
    </location>
</feature>
<feature type="topological domain" description="Cytoplasmic" evidence="1">
    <location>
        <begin position="118"/>
        <end position="143"/>
    </location>
</feature>
<feature type="transmembrane region" description="Helical; Name=4" evidence="1">
    <location>
        <begin position="144"/>
        <end position="164"/>
    </location>
</feature>
<feature type="topological domain" description="Extracellular" evidence="1">
    <location>
        <begin position="165"/>
        <end position="201"/>
    </location>
</feature>
<feature type="transmembrane region" description="Helical; Name=5" evidence="1">
    <location>
        <begin position="202"/>
        <end position="222"/>
    </location>
</feature>
<feature type="topological domain" description="Cytoplasmic" evidence="1">
    <location>
        <begin position="223"/>
        <end position="234"/>
    </location>
</feature>
<feature type="transmembrane region" description="Helical; Name=6" evidence="1">
    <location>
        <begin position="235"/>
        <end position="255"/>
    </location>
</feature>
<feature type="topological domain" description="Extracellular" evidence="1">
    <location>
        <begin position="256"/>
        <end position="269"/>
    </location>
</feature>
<feature type="transmembrane region" description="Helical; Name=7" evidence="1">
    <location>
        <begin position="270"/>
        <end position="290"/>
    </location>
</feature>
<feature type="topological domain" description="Cytoplasmic" evidence="1">
    <location>
        <begin position="291"/>
        <end position="312"/>
    </location>
</feature>
<feature type="glycosylation site" description="N-linked (GlcNAc...) asparagine" evidence="1">
    <location>
        <position position="3"/>
    </location>
</feature>
<feature type="glycosylation site" description="N-linked (GlcNAc...) asparagine" evidence="1">
    <location>
        <position position="17"/>
    </location>
</feature>
<feature type="disulfide bond" evidence="2">
    <location>
        <begin position="95"/>
        <end position="177"/>
    </location>
</feature>
<feature type="sequence variant" id="VAR_037342" description="In dbSNP:rs11204563.">
    <original>G</original>
    <variation>S</variation>
    <location>
        <position position="39"/>
    </location>
</feature>
<feature type="sequence variant" id="VAR_037343" description="In dbSNP:rs11204564.">
    <original>W</original>
    <variation>R</variation>
    <location>
        <position position="49"/>
    </location>
</feature>
<feature type="sequence variant" id="VAR_062028" description="In dbSNP:rs28575687.">
    <original>V</original>
    <variation>M</variation>
    <location>
        <position position="69"/>
    </location>
</feature>
<feature type="sequence variant" id="VAR_037344" description="In dbSNP:rs4584426.">
    <original>T</original>
    <variation>A</variation>
    <location>
        <position position="179"/>
    </location>
</feature>
<feature type="sequence variant" id="VAR_037345" description="In dbSNP:rs4474294.">
    <original>M</original>
    <variation>R</variation>
    <location>
        <position position="197"/>
    </location>
</feature>
<feature type="sequence variant" id="VAR_037346" description="In dbSNP:rs4362017.">
    <original>A</original>
    <variation>S</variation>
    <location>
        <position position="221"/>
    </location>
</feature>
<feature type="sequence variant" id="VAR_037347" description="In dbSNP:rs6695357.">
    <original>R</original>
    <variation>W</variation>
    <location>
        <position position="305"/>
    </location>
</feature>
<feature type="sequence variant" id="VAR_062029" description="In dbSNP:rs58882030.">
    <original>R</original>
    <variation>H</variation>
    <location>
        <position position="311"/>
    </location>
</feature>
<gene>
    <name type="primary">OR2T8</name>
    <name type="synonym">OR2T8P</name>
</gene>
<proteinExistence type="inferred from homology"/>
<comment type="function">
    <text evidence="3">Odorant receptor.</text>
</comment>
<comment type="subcellular location">
    <subcellularLocation>
        <location>Cell membrane</location>
        <topology>Multi-pass membrane protein</topology>
    </subcellularLocation>
</comment>
<comment type="similarity">
    <text evidence="2">Belongs to the G-protein coupled receptor 1 family.</text>
</comment>
<comment type="online information" name="Human Olfactory Receptor Data Exploratorium (HORDE)">
    <link uri="http://genome.weizmann.ac.il/horde/card/index/symbol:OR2T8"/>
</comment>
<reference key="1">
    <citation type="journal article" date="2006" name="Nature">
        <title>The DNA sequence and biological annotation of human chromosome 1.</title>
        <authorList>
            <person name="Gregory S.G."/>
            <person name="Barlow K.F."/>
            <person name="McLay K.E."/>
            <person name="Kaul R."/>
            <person name="Swarbreck D."/>
            <person name="Dunham A."/>
            <person name="Scott C.E."/>
            <person name="Howe K.L."/>
            <person name="Woodfine K."/>
            <person name="Spencer C.C.A."/>
            <person name="Jones M.C."/>
            <person name="Gillson C."/>
            <person name="Searle S."/>
            <person name="Zhou Y."/>
            <person name="Kokocinski F."/>
            <person name="McDonald L."/>
            <person name="Evans R."/>
            <person name="Phillips K."/>
            <person name="Atkinson A."/>
            <person name="Cooper R."/>
            <person name="Jones C."/>
            <person name="Hall R.E."/>
            <person name="Andrews T.D."/>
            <person name="Lloyd C."/>
            <person name="Ainscough R."/>
            <person name="Almeida J.P."/>
            <person name="Ambrose K.D."/>
            <person name="Anderson F."/>
            <person name="Andrew R.W."/>
            <person name="Ashwell R.I.S."/>
            <person name="Aubin K."/>
            <person name="Babbage A.K."/>
            <person name="Bagguley C.L."/>
            <person name="Bailey J."/>
            <person name="Beasley H."/>
            <person name="Bethel G."/>
            <person name="Bird C.P."/>
            <person name="Bray-Allen S."/>
            <person name="Brown J.Y."/>
            <person name="Brown A.J."/>
            <person name="Buckley D."/>
            <person name="Burton J."/>
            <person name="Bye J."/>
            <person name="Carder C."/>
            <person name="Chapman J.C."/>
            <person name="Clark S.Y."/>
            <person name="Clarke G."/>
            <person name="Clee C."/>
            <person name="Cobley V."/>
            <person name="Collier R.E."/>
            <person name="Corby N."/>
            <person name="Coville G.J."/>
            <person name="Davies J."/>
            <person name="Deadman R."/>
            <person name="Dunn M."/>
            <person name="Earthrowl M."/>
            <person name="Ellington A.G."/>
            <person name="Errington H."/>
            <person name="Frankish A."/>
            <person name="Frankland J."/>
            <person name="French L."/>
            <person name="Garner P."/>
            <person name="Garnett J."/>
            <person name="Gay L."/>
            <person name="Ghori M.R.J."/>
            <person name="Gibson R."/>
            <person name="Gilby L.M."/>
            <person name="Gillett W."/>
            <person name="Glithero R.J."/>
            <person name="Grafham D.V."/>
            <person name="Griffiths C."/>
            <person name="Griffiths-Jones S."/>
            <person name="Grocock R."/>
            <person name="Hammond S."/>
            <person name="Harrison E.S.I."/>
            <person name="Hart E."/>
            <person name="Haugen E."/>
            <person name="Heath P.D."/>
            <person name="Holmes S."/>
            <person name="Holt K."/>
            <person name="Howden P.J."/>
            <person name="Hunt A.R."/>
            <person name="Hunt S.E."/>
            <person name="Hunter G."/>
            <person name="Isherwood J."/>
            <person name="James R."/>
            <person name="Johnson C."/>
            <person name="Johnson D."/>
            <person name="Joy A."/>
            <person name="Kay M."/>
            <person name="Kershaw J.K."/>
            <person name="Kibukawa M."/>
            <person name="Kimberley A.M."/>
            <person name="King A."/>
            <person name="Knights A.J."/>
            <person name="Lad H."/>
            <person name="Laird G."/>
            <person name="Lawlor S."/>
            <person name="Leongamornlert D.A."/>
            <person name="Lloyd D.M."/>
            <person name="Loveland J."/>
            <person name="Lovell J."/>
            <person name="Lush M.J."/>
            <person name="Lyne R."/>
            <person name="Martin S."/>
            <person name="Mashreghi-Mohammadi M."/>
            <person name="Matthews L."/>
            <person name="Matthews N.S.W."/>
            <person name="McLaren S."/>
            <person name="Milne S."/>
            <person name="Mistry S."/>
            <person name="Moore M.J.F."/>
            <person name="Nickerson T."/>
            <person name="O'Dell C.N."/>
            <person name="Oliver K."/>
            <person name="Palmeiri A."/>
            <person name="Palmer S.A."/>
            <person name="Parker A."/>
            <person name="Patel D."/>
            <person name="Pearce A.V."/>
            <person name="Peck A.I."/>
            <person name="Pelan S."/>
            <person name="Phelps K."/>
            <person name="Phillimore B.J."/>
            <person name="Plumb R."/>
            <person name="Rajan J."/>
            <person name="Raymond C."/>
            <person name="Rouse G."/>
            <person name="Saenphimmachak C."/>
            <person name="Sehra H.K."/>
            <person name="Sheridan E."/>
            <person name="Shownkeen R."/>
            <person name="Sims S."/>
            <person name="Skuce C.D."/>
            <person name="Smith M."/>
            <person name="Steward C."/>
            <person name="Subramanian S."/>
            <person name="Sycamore N."/>
            <person name="Tracey A."/>
            <person name="Tromans A."/>
            <person name="Van Helmond Z."/>
            <person name="Wall M."/>
            <person name="Wallis J.M."/>
            <person name="White S."/>
            <person name="Whitehead S.L."/>
            <person name="Wilkinson J.E."/>
            <person name="Willey D.L."/>
            <person name="Williams H."/>
            <person name="Wilming L."/>
            <person name="Wray P.W."/>
            <person name="Wu Z."/>
            <person name="Coulson A."/>
            <person name="Vaudin M."/>
            <person name="Sulston J.E."/>
            <person name="Durbin R.M."/>
            <person name="Hubbard T."/>
            <person name="Wooster R."/>
            <person name="Dunham I."/>
            <person name="Carter N.P."/>
            <person name="McVean G."/>
            <person name="Ross M.T."/>
            <person name="Harrow J."/>
            <person name="Olson M.V."/>
            <person name="Beck S."/>
            <person name="Rogers J."/>
            <person name="Bentley D.R."/>
        </authorList>
    </citation>
    <scope>NUCLEOTIDE SEQUENCE [LARGE SCALE GENOMIC DNA]</scope>
</reference>
<evidence type="ECO:0000255" key="1"/>
<evidence type="ECO:0000255" key="2">
    <source>
        <dbReference type="PROSITE-ProRule" id="PRU00521"/>
    </source>
</evidence>
<evidence type="ECO:0000305" key="3"/>
<accession>A6NH00</accession>
<name>OR2T8_HUMAN</name>
<protein>
    <recommendedName>
        <fullName>Olfactory receptor 2T8</fullName>
    </recommendedName>
</protein>
<organism>
    <name type="scientific">Homo sapiens</name>
    <name type="common">Human</name>
    <dbReference type="NCBI Taxonomy" id="9606"/>
    <lineage>
        <taxon>Eukaryota</taxon>
        <taxon>Metazoa</taxon>
        <taxon>Chordata</taxon>
        <taxon>Craniata</taxon>
        <taxon>Vertebrata</taxon>
        <taxon>Euteleostomi</taxon>
        <taxon>Mammalia</taxon>
        <taxon>Eutheria</taxon>
        <taxon>Euarchontoglires</taxon>
        <taxon>Primates</taxon>
        <taxon>Haplorrhini</taxon>
        <taxon>Catarrhini</taxon>
        <taxon>Hominidae</taxon>
        <taxon>Homo</taxon>
    </lineage>
</organism>
<keyword id="KW-1003">Cell membrane</keyword>
<keyword id="KW-1015">Disulfide bond</keyword>
<keyword id="KW-0297">G-protein coupled receptor</keyword>
<keyword id="KW-0325">Glycoprotein</keyword>
<keyword id="KW-0472">Membrane</keyword>
<keyword id="KW-0552">Olfaction</keyword>
<keyword id="KW-0675">Receptor</keyword>
<keyword id="KW-1185">Reference proteome</keyword>
<keyword id="KW-0716">Sensory transduction</keyword>
<keyword id="KW-0807">Transducer</keyword>
<keyword id="KW-0812">Transmembrane</keyword>
<keyword id="KW-1133">Transmembrane helix</keyword>
<sequence length="312" mass="34659">MENGSYTSYFILLGLFNHTRAHQVLFMMVLSIVLTSLFGNSLMILLIHWDHRLHTPMYFLLSQLSLMDVMLVSTTVPKMAADYLTGSKAISRAGCGAQIFFLPTLGGGECFLLAAMAYDRYAAVCHPLRYPTLMSWQLCLRMNLSCWLLGAADGLLQAVATLSFPYCGAHEIDHFFCETPVLVRLACADTSVFENAMYICCVLMLLVPFSLILSSYGLILAAVLHMRSTEARKKAFATCSSHVAVVGLFYGAAIFTYMRPKSHRSTNHDKVVSAFYTMFTPLLNPLIYSVKNSEVKGALTRCMGRCVALSRE</sequence>